<proteinExistence type="inferred from homology"/>
<gene>
    <name type="primary">hspD</name>
    <name type="ordered locus">bll5219</name>
</gene>
<name>HSPD_BRADU</name>
<sequence>MRSYDFSPLWRSTIGFDRLFDLAESAQRATEDNYPPYNIERLGDDRYQISLAVAGFSPDEISVTAEQNVVTIEGNKTDKTEREFMYRGISTRAFKRQFNLADYVQVKNASFDNGLLKIELVREIPEAMKPRRIAINGATSDNLHKLESRAA</sequence>
<evidence type="ECO:0000255" key="1">
    <source>
        <dbReference type="PROSITE-ProRule" id="PRU00285"/>
    </source>
</evidence>
<evidence type="ECO:0000305" key="2"/>
<accession>O69241</accession>
<feature type="chain" id="PRO_0000126045" description="Small heat shock protein HspD">
    <location>
        <begin position="1"/>
        <end position="151"/>
    </location>
</feature>
<feature type="domain" description="sHSP" evidence="1">
    <location>
        <begin position="28"/>
        <end position="138"/>
    </location>
</feature>
<reference key="1">
    <citation type="journal article" date="1998" name="Arch. Microbiol.">
        <title>Identification of the Bradyrhizobium japonicum degP gene as part of an operon containing small heat-shock protein genes.</title>
        <authorList>
            <person name="Narberhaus F."/>
            <person name="Weiglhofer W."/>
            <person name="Fischer H.-M."/>
            <person name="Hennecke H."/>
        </authorList>
    </citation>
    <scope>NUCLEOTIDE SEQUENCE [GENOMIC DNA]</scope>
</reference>
<reference key="2">
    <citation type="journal article" date="2002" name="DNA Res.">
        <title>Complete genomic sequence of nitrogen-fixing symbiotic bacterium Bradyrhizobium japonicum USDA110.</title>
        <authorList>
            <person name="Kaneko T."/>
            <person name="Nakamura Y."/>
            <person name="Sato S."/>
            <person name="Minamisawa K."/>
            <person name="Uchiumi T."/>
            <person name="Sasamoto S."/>
            <person name="Watanabe A."/>
            <person name="Idesawa K."/>
            <person name="Iriguchi M."/>
            <person name="Kawashima K."/>
            <person name="Kohara M."/>
            <person name="Matsumoto M."/>
            <person name="Shimpo S."/>
            <person name="Tsuruoka H."/>
            <person name="Wada T."/>
            <person name="Yamada M."/>
            <person name="Tabata S."/>
        </authorList>
    </citation>
    <scope>NUCLEOTIDE SEQUENCE [LARGE SCALE GENOMIC DNA]</scope>
    <source>
        <strain>JCM 10833 / BCRC 13528 / IAM 13628 / NBRC 14792 / USDA 110</strain>
    </source>
</reference>
<protein>
    <recommendedName>
        <fullName>Small heat shock protein HspD</fullName>
    </recommendedName>
</protein>
<dbReference type="EMBL" id="AJ003064">
    <property type="protein sequence ID" value="CAA05835.1"/>
    <property type="molecule type" value="Genomic_DNA"/>
</dbReference>
<dbReference type="EMBL" id="BA000040">
    <property type="protein sequence ID" value="BAC50484.1"/>
    <property type="status" value="ALT_INIT"/>
    <property type="molecule type" value="Genomic_DNA"/>
</dbReference>
<dbReference type="RefSeq" id="NP_771859.1">
    <property type="nucleotide sequence ID" value="NC_004463.1"/>
</dbReference>
<dbReference type="RefSeq" id="WP_038967943.1">
    <property type="nucleotide sequence ID" value="NC_004463.1"/>
</dbReference>
<dbReference type="SMR" id="O69241"/>
<dbReference type="FunCoup" id="O69241">
    <property type="interactions" value="163"/>
</dbReference>
<dbReference type="STRING" id="224911.AAV28_23480"/>
<dbReference type="EnsemblBacteria" id="BAC50484">
    <property type="protein sequence ID" value="BAC50484"/>
    <property type="gene ID" value="BAC50484"/>
</dbReference>
<dbReference type="GeneID" id="46492217"/>
<dbReference type="KEGG" id="bja:bll5219"/>
<dbReference type="PATRIC" id="fig|224911.44.peg.5106"/>
<dbReference type="eggNOG" id="COG0071">
    <property type="taxonomic scope" value="Bacteria"/>
</dbReference>
<dbReference type="HOGENOM" id="CLU_046737_4_1_5"/>
<dbReference type="InParanoid" id="O69241"/>
<dbReference type="OrthoDB" id="9810618at2"/>
<dbReference type="Proteomes" id="UP000002526">
    <property type="component" value="Chromosome"/>
</dbReference>
<dbReference type="GO" id="GO:0005737">
    <property type="term" value="C:cytoplasm"/>
    <property type="evidence" value="ECO:0000318"/>
    <property type="project" value="GO_Central"/>
</dbReference>
<dbReference type="CDD" id="cd06470">
    <property type="entry name" value="ACD_IbpA-B_like"/>
    <property type="match status" value="1"/>
</dbReference>
<dbReference type="Gene3D" id="2.60.40.790">
    <property type="match status" value="1"/>
</dbReference>
<dbReference type="InterPro" id="IPR002068">
    <property type="entry name" value="A-crystallin/Hsp20_dom"/>
</dbReference>
<dbReference type="InterPro" id="IPR037913">
    <property type="entry name" value="ACD_IbpA/B"/>
</dbReference>
<dbReference type="InterPro" id="IPR008978">
    <property type="entry name" value="HSP20-like_chaperone"/>
</dbReference>
<dbReference type="PANTHER" id="PTHR47062">
    <property type="match status" value="1"/>
</dbReference>
<dbReference type="PANTHER" id="PTHR47062:SF1">
    <property type="entry name" value="SMALL HEAT SHOCK PROTEIN IBPA"/>
    <property type="match status" value="1"/>
</dbReference>
<dbReference type="Pfam" id="PF00011">
    <property type="entry name" value="HSP20"/>
    <property type="match status" value="1"/>
</dbReference>
<dbReference type="SUPFAM" id="SSF49764">
    <property type="entry name" value="HSP20-like chaperones"/>
    <property type="match status" value="1"/>
</dbReference>
<dbReference type="PROSITE" id="PS01031">
    <property type="entry name" value="SHSP"/>
    <property type="match status" value="1"/>
</dbReference>
<keyword id="KW-1185">Reference proteome</keyword>
<keyword id="KW-0346">Stress response</keyword>
<organism>
    <name type="scientific">Bradyrhizobium diazoefficiens (strain JCM 10833 / BCRC 13528 / IAM 13628 / NBRC 14792 / USDA 110)</name>
    <dbReference type="NCBI Taxonomy" id="224911"/>
    <lineage>
        <taxon>Bacteria</taxon>
        <taxon>Pseudomonadati</taxon>
        <taxon>Pseudomonadota</taxon>
        <taxon>Alphaproteobacteria</taxon>
        <taxon>Hyphomicrobiales</taxon>
        <taxon>Nitrobacteraceae</taxon>
        <taxon>Bradyrhizobium</taxon>
    </lineage>
</organism>
<comment type="similarity">
    <text evidence="1">Belongs to the small heat shock protein (HSP20) family.</text>
</comment>
<comment type="sequence caution" evidence="2">
    <conflict type="erroneous initiation">
        <sequence resource="EMBL-CDS" id="BAC50484"/>
    </conflict>
</comment>